<comment type="function">
    <text evidence="1">Essential component of the PAM complex, a complex required for the translocation of transit peptide-containing proteins from the inner membrane into the mitochondrial matrix in an ATP-dependent manner. In the complex, it is required to regulate activity of mtHSP70 (hsp70-5) via its interaction with tim14/pam18. May act by positioning tim14/pam18 in juxtaposition to mtHSP70 at the translocon to maximize ATPase stimulation (By similarity).</text>
</comment>
<comment type="subunit">
    <text evidence="1">Heterodimer with tim14/pam18. Component of the PAM complex, at least composed of hsp70-5/ssc1, grpe/mge1, tim44, un-4/pam16, pam17 and tim14/pam18 (By similarity).</text>
</comment>
<comment type="subcellular location">
    <subcellularLocation>
        <location evidence="1">Mitochondrion inner membrane</location>
        <topology evidence="1">Peripheral membrane protein</topology>
    </subcellularLocation>
</comment>
<comment type="domain">
    <text evidence="1">The J-like region, although related to the J domain does not stimulate ATPase activity of mtHSP70. It nevertheless mediates the heterodimerization with the J domain of PAM18 and is therefore essential for PAM complex function (By similarity).</text>
</comment>
<comment type="similarity">
    <text evidence="3">Belongs to the TIM16/PAM16 family.</text>
</comment>
<keyword id="KW-0472">Membrane</keyword>
<keyword id="KW-0496">Mitochondrion</keyword>
<keyword id="KW-0999">Mitochondrion inner membrane</keyword>
<keyword id="KW-0653">Protein transport</keyword>
<keyword id="KW-1185">Reference proteome</keyword>
<keyword id="KW-0811">Translocation</keyword>
<keyword id="KW-0813">Transport</keyword>
<proteinExistence type="inferred from homology"/>
<evidence type="ECO:0000250" key="1"/>
<evidence type="ECO:0000256" key="2">
    <source>
        <dbReference type="SAM" id="MobiDB-lite"/>
    </source>
</evidence>
<evidence type="ECO:0000305" key="3"/>
<accession>Q7S6S4</accession>
<feature type="chain" id="PRO_0000214095" description="Mitochondrial import inner membrane translocase subunit tim16">
    <location>
        <begin position="1"/>
        <end position="141"/>
    </location>
</feature>
<feature type="region of interest" description="J-like">
    <location>
        <begin position="59"/>
        <end position="117"/>
    </location>
</feature>
<feature type="region of interest" description="Disordered" evidence="2">
    <location>
        <begin position="119"/>
        <end position="141"/>
    </location>
</feature>
<organism>
    <name type="scientific">Neurospora crassa (strain ATCC 24698 / 74-OR23-1A / CBS 708.71 / DSM 1257 / FGSC 987)</name>
    <dbReference type="NCBI Taxonomy" id="367110"/>
    <lineage>
        <taxon>Eukaryota</taxon>
        <taxon>Fungi</taxon>
        <taxon>Dikarya</taxon>
        <taxon>Ascomycota</taxon>
        <taxon>Pezizomycotina</taxon>
        <taxon>Sordariomycetes</taxon>
        <taxon>Sordariomycetidae</taxon>
        <taxon>Sordariales</taxon>
        <taxon>Sordariaceae</taxon>
        <taxon>Neurospora</taxon>
    </lineage>
</organism>
<name>TIM16_NEUCR</name>
<reference key="1">
    <citation type="journal article" date="2003" name="Nature">
        <title>The genome sequence of the filamentous fungus Neurospora crassa.</title>
        <authorList>
            <person name="Galagan J.E."/>
            <person name="Calvo S.E."/>
            <person name="Borkovich K.A."/>
            <person name="Selker E.U."/>
            <person name="Read N.D."/>
            <person name="Jaffe D.B."/>
            <person name="FitzHugh W."/>
            <person name="Ma L.-J."/>
            <person name="Smirnov S."/>
            <person name="Purcell S."/>
            <person name="Rehman B."/>
            <person name="Elkins T."/>
            <person name="Engels R."/>
            <person name="Wang S."/>
            <person name="Nielsen C.B."/>
            <person name="Butler J."/>
            <person name="Endrizzi M."/>
            <person name="Qui D."/>
            <person name="Ianakiev P."/>
            <person name="Bell-Pedersen D."/>
            <person name="Nelson M.A."/>
            <person name="Werner-Washburne M."/>
            <person name="Selitrennikoff C.P."/>
            <person name="Kinsey J.A."/>
            <person name="Braun E.L."/>
            <person name="Zelter A."/>
            <person name="Schulte U."/>
            <person name="Kothe G.O."/>
            <person name="Jedd G."/>
            <person name="Mewes H.-W."/>
            <person name="Staben C."/>
            <person name="Marcotte E."/>
            <person name="Greenberg D."/>
            <person name="Roy A."/>
            <person name="Foley K."/>
            <person name="Naylor J."/>
            <person name="Stange-Thomann N."/>
            <person name="Barrett R."/>
            <person name="Gnerre S."/>
            <person name="Kamal M."/>
            <person name="Kamvysselis M."/>
            <person name="Mauceli E.W."/>
            <person name="Bielke C."/>
            <person name="Rudd S."/>
            <person name="Frishman D."/>
            <person name="Krystofova S."/>
            <person name="Rasmussen C."/>
            <person name="Metzenberg R.L."/>
            <person name="Perkins D.D."/>
            <person name="Kroken S."/>
            <person name="Cogoni C."/>
            <person name="Macino G."/>
            <person name="Catcheside D.E.A."/>
            <person name="Li W."/>
            <person name="Pratt R.J."/>
            <person name="Osmani S.A."/>
            <person name="DeSouza C.P.C."/>
            <person name="Glass N.L."/>
            <person name="Orbach M.J."/>
            <person name="Berglund J.A."/>
            <person name="Voelker R."/>
            <person name="Yarden O."/>
            <person name="Plamann M."/>
            <person name="Seiler S."/>
            <person name="Dunlap J.C."/>
            <person name="Radford A."/>
            <person name="Aramayo R."/>
            <person name="Natvig D.O."/>
            <person name="Alex L.A."/>
            <person name="Mannhaupt G."/>
            <person name="Ebbole D.J."/>
            <person name="Freitag M."/>
            <person name="Paulsen I."/>
            <person name="Sachs M.S."/>
            <person name="Lander E.S."/>
            <person name="Nusbaum C."/>
            <person name="Birren B.W."/>
        </authorList>
    </citation>
    <scope>NUCLEOTIDE SEQUENCE [LARGE SCALE GENOMIC DNA]</scope>
    <source>
        <strain>ATCC 24698 / 74-OR23-1A / CBS 708.71 / DSM 1257 / FGSC 987</strain>
    </source>
</reference>
<sequence length="141" mass="15805">MAYRLITQVVVVGSRVLGRAFAEAYKQAAASSQYQRAQQKNGNAATGRASLTSGMTLDEACKILNVNKPADGTAANMEEVMERFKRLFDANDPEKGGSFYLQSKVVRARERLEAEIKPKMEEKQAEEEVKEGWNPKIYKDR</sequence>
<dbReference type="EMBL" id="CM002241">
    <property type="protein sequence ID" value="EAA31241.1"/>
    <property type="molecule type" value="Genomic_DNA"/>
</dbReference>
<dbReference type="RefSeq" id="XP_960477.1">
    <property type="nucleotide sequence ID" value="XM_955384.2"/>
</dbReference>
<dbReference type="SMR" id="Q7S6S4"/>
<dbReference type="FunCoup" id="Q7S6S4">
    <property type="interactions" value="225"/>
</dbReference>
<dbReference type="STRING" id="367110.Q7S6S4"/>
<dbReference type="PaxDb" id="5141-EFNCRP00000005530"/>
<dbReference type="EnsemblFungi" id="EAA31241">
    <property type="protein sequence ID" value="EAA31241"/>
    <property type="gene ID" value="NCU05515"/>
</dbReference>
<dbReference type="GeneID" id="3876599"/>
<dbReference type="KEGG" id="ncr:NCU05515"/>
<dbReference type="VEuPathDB" id="FungiDB:NCU05515"/>
<dbReference type="HOGENOM" id="CLU_101461_0_1_1"/>
<dbReference type="InParanoid" id="Q7S6S4"/>
<dbReference type="OMA" id="QHLFRAN"/>
<dbReference type="OrthoDB" id="10262892at2759"/>
<dbReference type="Proteomes" id="UP000001805">
    <property type="component" value="Chromosome 5, Linkage Group VI"/>
</dbReference>
<dbReference type="GO" id="GO:0001405">
    <property type="term" value="C:PAM complex, Tim23 associated import motor"/>
    <property type="evidence" value="ECO:0007669"/>
    <property type="project" value="EnsemblFungi"/>
</dbReference>
<dbReference type="GO" id="GO:0005744">
    <property type="term" value="C:TIM23 mitochondrial import inner membrane translocase complex"/>
    <property type="evidence" value="ECO:0000318"/>
    <property type="project" value="GO_Central"/>
</dbReference>
<dbReference type="GO" id="GO:0019904">
    <property type="term" value="F:protein domain specific binding"/>
    <property type="evidence" value="ECO:0007669"/>
    <property type="project" value="EnsemblFungi"/>
</dbReference>
<dbReference type="GO" id="GO:0030150">
    <property type="term" value="P:protein import into mitochondrial matrix"/>
    <property type="evidence" value="ECO:0000318"/>
    <property type="project" value="GO_Central"/>
</dbReference>
<dbReference type="FunFam" id="1.10.287.110:FF:000006">
    <property type="entry name" value="Import inner membrane translocase subunit TIM16"/>
    <property type="match status" value="1"/>
</dbReference>
<dbReference type="Gene3D" id="1.10.287.110">
    <property type="entry name" value="DnaJ domain"/>
    <property type="match status" value="1"/>
</dbReference>
<dbReference type="InterPro" id="IPR036869">
    <property type="entry name" value="J_dom_sf"/>
</dbReference>
<dbReference type="InterPro" id="IPR005341">
    <property type="entry name" value="Tim16"/>
</dbReference>
<dbReference type="PANTHER" id="PTHR12388">
    <property type="entry name" value="MITOCHONDRIA ASSOCIATED GRANULOCYTE MACROPHAGE CSF SIGNALING MOLECULE"/>
    <property type="match status" value="1"/>
</dbReference>
<dbReference type="PANTHER" id="PTHR12388:SF0">
    <property type="entry name" value="MITOCHONDRIAL IMPORT INNER MEMBRANE TRANSLOCASE SUBUNIT TIM16"/>
    <property type="match status" value="1"/>
</dbReference>
<dbReference type="Pfam" id="PF03656">
    <property type="entry name" value="Pam16"/>
    <property type="match status" value="1"/>
</dbReference>
<gene>
    <name type="primary">un-4</name>
    <name type="synonym">pam16</name>
    <name type="synonym">tim16</name>
    <name type="ORF">NCU05515</name>
</gene>
<protein>
    <recommendedName>
        <fullName>Mitochondrial import inner membrane translocase subunit tim16</fullName>
    </recommendedName>
    <alternativeName>
        <fullName>Presequence translocated-associated motor subunit pam16</fullName>
    </alternativeName>
</protein>